<comment type="function">
    <text evidence="1">Catalyzes the deamination of dCTP to dUTP.</text>
</comment>
<comment type="catalytic activity">
    <reaction evidence="1">
        <text>dCTP + H2O + H(+) = dUTP + NH4(+)</text>
        <dbReference type="Rhea" id="RHEA:22680"/>
        <dbReference type="ChEBI" id="CHEBI:15377"/>
        <dbReference type="ChEBI" id="CHEBI:15378"/>
        <dbReference type="ChEBI" id="CHEBI:28938"/>
        <dbReference type="ChEBI" id="CHEBI:61481"/>
        <dbReference type="ChEBI" id="CHEBI:61555"/>
        <dbReference type="EC" id="3.5.4.13"/>
    </reaction>
</comment>
<comment type="pathway">
    <text evidence="1">Pyrimidine metabolism; dUMP biosynthesis; dUMP from dCTP (dUTP route): step 1/2.</text>
</comment>
<comment type="subunit">
    <text evidence="1">Homotrimer.</text>
</comment>
<comment type="similarity">
    <text evidence="1">Belongs to the dCTP deaminase family.</text>
</comment>
<reference key="1">
    <citation type="journal article" date="2010" name="Genome Biol. Evol.">
        <title>Continuing evolution of Burkholderia mallei through genome reduction and large-scale rearrangements.</title>
        <authorList>
            <person name="Losada L."/>
            <person name="Ronning C.M."/>
            <person name="DeShazer D."/>
            <person name="Woods D."/>
            <person name="Fedorova N."/>
            <person name="Kim H.S."/>
            <person name="Shabalina S.A."/>
            <person name="Pearson T.R."/>
            <person name="Brinkac L."/>
            <person name="Tan P."/>
            <person name="Nandi T."/>
            <person name="Crabtree J."/>
            <person name="Badger J."/>
            <person name="Beckstrom-Sternberg S."/>
            <person name="Saqib M."/>
            <person name="Schutzer S.E."/>
            <person name="Keim P."/>
            <person name="Nierman W.C."/>
        </authorList>
    </citation>
    <scope>NUCLEOTIDE SEQUENCE [LARGE SCALE GENOMIC DNA]</scope>
    <source>
        <strain>668</strain>
    </source>
</reference>
<feature type="chain" id="PRO_1000009692" description="dCTP deaminase">
    <location>
        <begin position="1"/>
        <end position="189"/>
    </location>
</feature>
<feature type="active site" description="Proton donor/acceptor" evidence="1">
    <location>
        <position position="138"/>
    </location>
</feature>
<feature type="binding site" evidence="1">
    <location>
        <begin position="112"/>
        <end position="117"/>
    </location>
    <ligand>
        <name>dCTP</name>
        <dbReference type="ChEBI" id="CHEBI:61481"/>
    </ligand>
</feature>
<feature type="binding site" evidence="1">
    <location>
        <begin position="136"/>
        <end position="138"/>
    </location>
    <ligand>
        <name>dCTP</name>
        <dbReference type="ChEBI" id="CHEBI:61481"/>
    </ligand>
</feature>
<feature type="binding site" evidence="1">
    <location>
        <position position="157"/>
    </location>
    <ligand>
        <name>dCTP</name>
        <dbReference type="ChEBI" id="CHEBI:61481"/>
    </ligand>
</feature>
<feature type="binding site" evidence="1">
    <location>
        <position position="171"/>
    </location>
    <ligand>
        <name>dCTP</name>
        <dbReference type="ChEBI" id="CHEBI:61481"/>
    </ligand>
</feature>
<feature type="binding site" evidence="1">
    <location>
        <position position="181"/>
    </location>
    <ligand>
        <name>dCTP</name>
        <dbReference type="ChEBI" id="CHEBI:61481"/>
    </ligand>
</feature>
<name>DCD_BURP6</name>
<protein>
    <recommendedName>
        <fullName evidence="1">dCTP deaminase</fullName>
        <ecNumber evidence="1">3.5.4.13</ecNumber>
    </recommendedName>
    <alternativeName>
        <fullName evidence="1">Deoxycytidine triphosphate deaminase</fullName>
    </alternativeName>
</protein>
<dbReference type="EC" id="3.5.4.13" evidence="1"/>
<dbReference type="EMBL" id="CP000570">
    <property type="protein sequence ID" value="ABN82400.1"/>
    <property type="molecule type" value="Genomic_DNA"/>
</dbReference>
<dbReference type="RefSeq" id="WP_004192666.1">
    <property type="nucleotide sequence ID" value="NC_009074.1"/>
</dbReference>
<dbReference type="SMR" id="A3N6Y6"/>
<dbReference type="GeneID" id="93059502"/>
<dbReference type="KEGG" id="bpd:BURPS668_1057"/>
<dbReference type="HOGENOM" id="CLU_087476_4_0_4"/>
<dbReference type="UniPathway" id="UPA00610">
    <property type="reaction ID" value="UER00665"/>
</dbReference>
<dbReference type="GO" id="GO:0008829">
    <property type="term" value="F:dCTP deaminase activity"/>
    <property type="evidence" value="ECO:0007669"/>
    <property type="project" value="UniProtKB-UniRule"/>
</dbReference>
<dbReference type="GO" id="GO:0000166">
    <property type="term" value="F:nucleotide binding"/>
    <property type="evidence" value="ECO:0007669"/>
    <property type="project" value="UniProtKB-KW"/>
</dbReference>
<dbReference type="GO" id="GO:0006226">
    <property type="term" value="P:dUMP biosynthetic process"/>
    <property type="evidence" value="ECO:0007669"/>
    <property type="project" value="UniProtKB-UniPathway"/>
</dbReference>
<dbReference type="GO" id="GO:0006229">
    <property type="term" value="P:dUTP biosynthetic process"/>
    <property type="evidence" value="ECO:0007669"/>
    <property type="project" value="UniProtKB-UniRule"/>
</dbReference>
<dbReference type="GO" id="GO:0015949">
    <property type="term" value="P:nucleobase-containing small molecule interconversion"/>
    <property type="evidence" value="ECO:0007669"/>
    <property type="project" value="TreeGrafter"/>
</dbReference>
<dbReference type="CDD" id="cd07557">
    <property type="entry name" value="trimeric_dUTPase"/>
    <property type="match status" value="1"/>
</dbReference>
<dbReference type="FunFam" id="2.70.40.10:FF:000001">
    <property type="entry name" value="dCTP deaminase"/>
    <property type="match status" value="1"/>
</dbReference>
<dbReference type="Gene3D" id="2.70.40.10">
    <property type="match status" value="1"/>
</dbReference>
<dbReference type="HAMAP" id="MF_00146">
    <property type="entry name" value="dCTP_deaminase"/>
    <property type="match status" value="1"/>
</dbReference>
<dbReference type="InterPro" id="IPR011962">
    <property type="entry name" value="dCTP_deaminase"/>
</dbReference>
<dbReference type="InterPro" id="IPR036157">
    <property type="entry name" value="dUTPase-like_sf"/>
</dbReference>
<dbReference type="InterPro" id="IPR033704">
    <property type="entry name" value="dUTPase_trimeric"/>
</dbReference>
<dbReference type="NCBIfam" id="TIGR02274">
    <property type="entry name" value="dCTP_deam"/>
    <property type="match status" value="1"/>
</dbReference>
<dbReference type="PANTHER" id="PTHR42680">
    <property type="entry name" value="DCTP DEAMINASE"/>
    <property type="match status" value="1"/>
</dbReference>
<dbReference type="PANTHER" id="PTHR42680:SF3">
    <property type="entry name" value="DCTP DEAMINASE"/>
    <property type="match status" value="1"/>
</dbReference>
<dbReference type="Pfam" id="PF22769">
    <property type="entry name" value="DCD"/>
    <property type="match status" value="1"/>
</dbReference>
<dbReference type="SUPFAM" id="SSF51283">
    <property type="entry name" value="dUTPase-like"/>
    <property type="match status" value="1"/>
</dbReference>
<gene>
    <name evidence="1" type="primary">dcd</name>
    <name type="ordered locus">BURPS668_1057</name>
</gene>
<organism>
    <name type="scientific">Burkholderia pseudomallei (strain 668)</name>
    <dbReference type="NCBI Taxonomy" id="320373"/>
    <lineage>
        <taxon>Bacteria</taxon>
        <taxon>Pseudomonadati</taxon>
        <taxon>Pseudomonadota</taxon>
        <taxon>Betaproteobacteria</taxon>
        <taxon>Burkholderiales</taxon>
        <taxon>Burkholderiaceae</taxon>
        <taxon>Burkholderia</taxon>
        <taxon>pseudomallei group</taxon>
    </lineage>
</organism>
<evidence type="ECO:0000255" key="1">
    <source>
        <dbReference type="HAMAP-Rule" id="MF_00146"/>
    </source>
</evidence>
<proteinExistence type="inferred from homology"/>
<keyword id="KW-0378">Hydrolase</keyword>
<keyword id="KW-0546">Nucleotide metabolism</keyword>
<keyword id="KW-0547">Nucleotide-binding</keyword>
<accession>A3N6Y6</accession>
<sequence length="189" mass="21312">MSIKSDKWIRRMAEEHKMIEPFVPDQVRAAEDGRKIVSYGTSSYGYDIRCADEFKIFTNINSTIVDPKNFDEGSFVDFKGDVCIIPPNSFALARTVEYFRIPRTVLTVCLGKSTYARCGIIVNVTPFEPEWEGYVTLEFSNTTPLPAKIYANEGVAQVLFFESDEVCDVSYADRGGKYQGQRGVTLPKT</sequence>